<protein>
    <recommendedName>
        <fullName evidence="1">Na(+)-translocating NADH-quinone reductase subunit D</fullName>
        <shortName evidence="1">Na(+)-NQR subunit D</shortName>
        <shortName evidence="1">Na(+)-translocating NQR subunit D</shortName>
        <ecNumber evidence="1">7.2.1.1</ecNumber>
    </recommendedName>
    <alternativeName>
        <fullName evidence="1">NQR complex subunit D</fullName>
    </alternativeName>
    <alternativeName>
        <fullName evidence="1">NQR-1 subunit D</fullName>
    </alternativeName>
</protein>
<name>NQRD_SHESA</name>
<proteinExistence type="inferred from homology"/>
<keyword id="KW-0997">Cell inner membrane</keyword>
<keyword id="KW-1003">Cell membrane</keyword>
<keyword id="KW-0406">Ion transport</keyword>
<keyword id="KW-0472">Membrane</keyword>
<keyword id="KW-0520">NAD</keyword>
<keyword id="KW-0915">Sodium</keyword>
<keyword id="KW-0739">Sodium transport</keyword>
<keyword id="KW-1278">Translocase</keyword>
<keyword id="KW-0812">Transmembrane</keyword>
<keyword id="KW-1133">Transmembrane helix</keyword>
<keyword id="KW-0813">Transport</keyword>
<keyword id="KW-0830">Ubiquinone</keyword>
<dbReference type="EC" id="7.2.1.1" evidence="1"/>
<dbReference type="EMBL" id="CP000469">
    <property type="protein sequence ID" value="ABK47176.1"/>
    <property type="molecule type" value="Genomic_DNA"/>
</dbReference>
<dbReference type="RefSeq" id="WP_011621733.1">
    <property type="nucleotide sequence ID" value="NC_008577.1"/>
</dbReference>
<dbReference type="SMR" id="A0KTQ7"/>
<dbReference type="STRING" id="94122.Shewana3_0941"/>
<dbReference type="KEGG" id="shn:Shewana3_0941"/>
<dbReference type="eggNOG" id="COG1347">
    <property type="taxonomic scope" value="Bacteria"/>
</dbReference>
<dbReference type="HOGENOM" id="CLU_046659_1_1_6"/>
<dbReference type="OrthoDB" id="9782945at2"/>
<dbReference type="Proteomes" id="UP000002589">
    <property type="component" value="Chromosome"/>
</dbReference>
<dbReference type="GO" id="GO:0005886">
    <property type="term" value="C:plasma membrane"/>
    <property type="evidence" value="ECO:0007669"/>
    <property type="project" value="UniProtKB-SubCell"/>
</dbReference>
<dbReference type="GO" id="GO:0016655">
    <property type="term" value="F:oxidoreductase activity, acting on NAD(P)H, quinone or similar compound as acceptor"/>
    <property type="evidence" value="ECO:0007669"/>
    <property type="project" value="UniProtKB-UniRule"/>
</dbReference>
<dbReference type="GO" id="GO:0006814">
    <property type="term" value="P:sodium ion transport"/>
    <property type="evidence" value="ECO:0007669"/>
    <property type="project" value="UniProtKB-UniRule"/>
</dbReference>
<dbReference type="HAMAP" id="MF_00428">
    <property type="entry name" value="NqrD"/>
    <property type="match status" value="1"/>
</dbReference>
<dbReference type="InterPro" id="IPR011292">
    <property type="entry name" value="NqrD"/>
</dbReference>
<dbReference type="InterPro" id="IPR003667">
    <property type="entry name" value="NqrDE/RnfAE"/>
</dbReference>
<dbReference type="NCBIfam" id="TIGR01939">
    <property type="entry name" value="nqrD"/>
    <property type="match status" value="1"/>
</dbReference>
<dbReference type="NCBIfam" id="NF006777">
    <property type="entry name" value="PRK09292.1"/>
    <property type="match status" value="1"/>
</dbReference>
<dbReference type="NCBIfam" id="NF009070">
    <property type="entry name" value="PRK12405.1"/>
    <property type="match status" value="1"/>
</dbReference>
<dbReference type="PANTHER" id="PTHR30586">
    <property type="entry name" value="ELECTRON TRANSPORT COMPLEX PROTEIN RNFE"/>
    <property type="match status" value="1"/>
</dbReference>
<dbReference type="PANTHER" id="PTHR30586:SF1">
    <property type="entry name" value="NA(+)-TRANSLOCATING NADH-QUINONE REDUCTASE SUBUNIT D"/>
    <property type="match status" value="1"/>
</dbReference>
<dbReference type="Pfam" id="PF02508">
    <property type="entry name" value="Rnf-Nqr"/>
    <property type="match status" value="1"/>
</dbReference>
<dbReference type="PIRSF" id="PIRSF006102">
    <property type="entry name" value="NQR_DE"/>
    <property type="match status" value="1"/>
</dbReference>
<evidence type="ECO:0000255" key="1">
    <source>
        <dbReference type="HAMAP-Rule" id="MF_00428"/>
    </source>
</evidence>
<organism>
    <name type="scientific">Shewanella sp. (strain ANA-3)</name>
    <dbReference type="NCBI Taxonomy" id="94122"/>
    <lineage>
        <taxon>Bacteria</taxon>
        <taxon>Pseudomonadati</taxon>
        <taxon>Pseudomonadota</taxon>
        <taxon>Gammaproteobacteria</taxon>
        <taxon>Alteromonadales</taxon>
        <taxon>Shewanellaceae</taxon>
        <taxon>Shewanella</taxon>
    </lineage>
</organism>
<comment type="function">
    <text evidence="1">NQR complex catalyzes the reduction of ubiquinone-1 to ubiquinol by two successive reactions, coupled with the transport of Na(+) ions from the cytoplasm to the periplasm. NqrA to NqrE are probably involved in the second step, the conversion of ubisemiquinone to ubiquinol.</text>
</comment>
<comment type="catalytic activity">
    <reaction evidence="1">
        <text>a ubiquinone + n Na(+)(in) + NADH + H(+) = a ubiquinol + n Na(+)(out) + NAD(+)</text>
        <dbReference type="Rhea" id="RHEA:47748"/>
        <dbReference type="Rhea" id="RHEA-COMP:9565"/>
        <dbReference type="Rhea" id="RHEA-COMP:9566"/>
        <dbReference type="ChEBI" id="CHEBI:15378"/>
        <dbReference type="ChEBI" id="CHEBI:16389"/>
        <dbReference type="ChEBI" id="CHEBI:17976"/>
        <dbReference type="ChEBI" id="CHEBI:29101"/>
        <dbReference type="ChEBI" id="CHEBI:57540"/>
        <dbReference type="ChEBI" id="CHEBI:57945"/>
        <dbReference type="EC" id="7.2.1.1"/>
    </reaction>
</comment>
<comment type="subunit">
    <text evidence="1">Composed of six subunits; NqrA, NqrB, NqrC, NqrD, NqrE and NqrF.</text>
</comment>
<comment type="subcellular location">
    <subcellularLocation>
        <location evidence="1">Cell inner membrane</location>
        <topology evidence="1">Multi-pass membrane protein</topology>
    </subcellularLocation>
</comment>
<comment type="similarity">
    <text evidence="1">Belongs to the NqrDE/RnfAE family.</text>
</comment>
<sequence>MSDAKELKQVLTGPIVNNNPIALQVLGVCSALAVTSKLETALVMALALTAVTAFSNLFISMIRNHIPSSVRIIVQMTIIASLVIVVDQLLQAYAYQISKQLSVFVGLIITNCIVMGRAEAYAMKTPPMMSFMDGIGNGLGYGAILLAVGFVRELFGNGSLFGVQILHKISEGGWYQPNGLLLLPPSAFFLIGILIWIIRTYKPEQVEAKG</sequence>
<reference key="1">
    <citation type="submission" date="2006-09" db="EMBL/GenBank/DDBJ databases">
        <title>Complete sequence of chromosome 1 of Shewanella sp. ANA-3.</title>
        <authorList>
            <person name="Copeland A."/>
            <person name="Lucas S."/>
            <person name="Lapidus A."/>
            <person name="Barry K."/>
            <person name="Detter J.C."/>
            <person name="Glavina del Rio T."/>
            <person name="Hammon N."/>
            <person name="Israni S."/>
            <person name="Dalin E."/>
            <person name="Tice H."/>
            <person name="Pitluck S."/>
            <person name="Chertkov O."/>
            <person name="Brettin T."/>
            <person name="Bruce D."/>
            <person name="Han C."/>
            <person name="Tapia R."/>
            <person name="Gilna P."/>
            <person name="Schmutz J."/>
            <person name="Larimer F."/>
            <person name="Land M."/>
            <person name="Hauser L."/>
            <person name="Kyrpides N."/>
            <person name="Kim E."/>
            <person name="Newman D."/>
            <person name="Salticov C."/>
            <person name="Konstantinidis K."/>
            <person name="Klappenback J."/>
            <person name="Tiedje J."/>
            <person name="Richardson P."/>
        </authorList>
    </citation>
    <scope>NUCLEOTIDE SEQUENCE [LARGE SCALE GENOMIC DNA]</scope>
    <source>
        <strain>ANA-3</strain>
    </source>
</reference>
<gene>
    <name evidence="1" type="primary">nqrD</name>
    <name type="ordered locus">Shewana3_0941</name>
</gene>
<accession>A0KTQ7</accession>
<feature type="chain" id="PRO_1000060172" description="Na(+)-translocating NADH-quinone reductase subunit D">
    <location>
        <begin position="1"/>
        <end position="210"/>
    </location>
</feature>
<feature type="transmembrane region" description="Helical" evidence="1">
    <location>
        <begin position="14"/>
        <end position="34"/>
    </location>
</feature>
<feature type="transmembrane region" description="Helical" evidence="1">
    <location>
        <begin position="42"/>
        <end position="62"/>
    </location>
</feature>
<feature type="transmembrane region" description="Helical" evidence="1">
    <location>
        <begin position="72"/>
        <end position="92"/>
    </location>
</feature>
<feature type="transmembrane region" description="Helical" evidence="1">
    <location>
        <begin position="103"/>
        <end position="123"/>
    </location>
</feature>
<feature type="transmembrane region" description="Helical" evidence="1">
    <location>
        <begin position="131"/>
        <end position="151"/>
    </location>
</feature>
<feature type="transmembrane region" description="Helical" evidence="1">
    <location>
        <begin position="178"/>
        <end position="198"/>
    </location>
</feature>